<dbReference type="EC" id="3.5.1.135" evidence="2"/>
<dbReference type="EMBL" id="FM954972">
    <property type="protein sequence ID" value="CAV18364.1"/>
    <property type="molecule type" value="Genomic_DNA"/>
</dbReference>
<dbReference type="SMR" id="B7VN21"/>
<dbReference type="STRING" id="575788.VS_1232"/>
<dbReference type="KEGG" id="vsp:VS_1232"/>
<dbReference type="PATRIC" id="fig|575788.5.peg.2551"/>
<dbReference type="eggNOG" id="COG3097">
    <property type="taxonomic scope" value="Bacteria"/>
</dbReference>
<dbReference type="HOGENOM" id="CLU_152586_0_0_6"/>
<dbReference type="Proteomes" id="UP000009100">
    <property type="component" value="Chromosome 1"/>
</dbReference>
<dbReference type="GO" id="GO:0005829">
    <property type="term" value="C:cytosol"/>
    <property type="evidence" value="ECO:0007669"/>
    <property type="project" value="TreeGrafter"/>
</dbReference>
<dbReference type="GO" id="GO:0016813">
    <property type="term" value="F:hydrolase activity, acting on carbon-nitrogen (but not peptide) bonds, in linear amidines"/>
    <property type="evidence" value="ECO:0007669"/>
    <property type="project" value="UniProtKB-UniRule"/>
</dbReference>
<dbReference type="GO" id="GO:0106251">
    <property type="term" value="F:N4-acetylcytidine amidohydrolase activity"/>
    <property type="evidence" value="ECO:0007669"/>
    <property type="project" value="RHEA"/>
</dbReference>
<dbReference type="CDD" id="cd06552">
    <property type="entry name" value="ASCH_yqfb_like"/>
    <property type="match status" value="1"/>
</dbReference>
<dbReference type="Gene3D" id="2.30.130.30">
    <property type="entry name" value="Hypothetical protein"/>
    <property type="match status" value="1"/>
</dbReference>
<dbReference type="HAMAP" id="MF_00684">
    <property type="entry name" value="ac4C_amidohydr"/>
    <property type="match status" value="1"/>
</dbReference>
<dbReference type="InterPro" id="IPR008314">
    <property type="entry name" value="AC4CH"/>
</dbReference>
<dbReference type="InterPro" id="IPR007374">
    <property type="entry name" value="ASCH_domain"/>
</dbReference>
<dbReference type="InterPro" id="IPR015947">
    <property type="entry name" value="PUA-like_sf"/>
</dbReference>
<dbReference type="NCBIfam" id="NF003443">
    <property type="entry name" value="PRK04980.1"/>
    <property type="match status" value="1"/>
</dbReference>
<dbReference type="PANTHER" id="PTHR38088">
    <property type="entry name" value="UCP029143 FAMILY PROTEIN"/>
    <property type="match status" value="1"/>
</dbReference>
<dbReference type="PANTHER" id="PTHR38088:SF2">
    <property type="entry name" value="UCP029143 FAMILY PROTEIN"/>
    <property type="match status" value="1"/>
</dbReference>
<dbReference type="Pfam" id="PF04266">
    <property type="entry name" value="ASCH"/>
    <property type="match status" value="1"/>
</dbReference>
<dbReference type="PIRSF" id="PIRSF029143">
    <property type="entry name" value="UCP029143"/>
    <property type="match status" value="1"/>
</dbReference>
<dbReference type="SMART" id="SM01022">
    <property type="entry name" value="ASCH"/>
    <property type="match status" value="1"/>
</dbReference>
<dbReference type="SUPFAM" id="SSF88697">
    <property type="entry name" value="PUA domain-like"/>
    <property type="match status" value="1"/>
</dbReference>
<proteinExistence type="inferred from homology"/>
<keyword id="KW-0378">Hydrolase</keyword>
<sequence length="104" mass="11945">MTAPTTMTFFERFETDILSGKKTITIRDESERNYQPGSVVEVSTLEQGRVFCNLKIISVEPILFYDLGEFHAQQENMTLDVLKDVIQDIYPGISQLYVVSYELV</sequence>
<reference key="1">
    <citation type="submission" date="2009-02" db="EMBL/GenBank/DDBJ databases">
        <title>Vibrio splendidus str. LGP32 complete genome.</title>
        <authorList>
            <person name="Mazel D."/>
            <person name="Le Roux F."/>
        </authorList>
    </citation>
    <scope>NUCLEOTIDE SEQUENCE [LARGE SCALE GENOMIC DNA]</scope>
    <source>
        <strain>LGP32</strain>
    </source>
</reference>
<gene>
    <name type="ordered locus">VS_1232</name>
</gene>
<accession>B7VN21</accession>
<feature type="chain" id="PRO_1000147754" description="N(4)-acetylcytidine amidohydrolase">
    <location>
        <begin position="1"/>
        <end position="104"/>
    </location>
</feature>
<feature type="domain" description="ASCH" evidence="1">
    <location>
        <begin position="7"/>
        <end position="95"/>
    </location>
</feature>
<feature type="active site" description="Proton acceptor" evidence="2">
    <location>
        <position position="22"/>
    </location>
</feature>
<feature type="active site" description="Nucleophile" evidence="2">
    <location>
        <position position="25"/>
    </location>
</feature>
<feature type="active site" description="Proton donor" evidence="2">
    <location>
        <position position="75"/>
    </location>
</feature>
<protein>
    <recommendedName>
        <fullName evidence="2">N(4)-acetylcytidine amidohydrolase</fullName>
        <shortName evidence="2">ac4C amidohydrolase</shortName>
        <ecNumber evidence="2">3.5.1.135</ecNumber>
    </recommendedName>
</protein>
<comment type="function">
    <text evidence="2">Catalyzes the hydrolysis of N(4)-acetylcytidine (ac4C).</text>
</comment>
<comment type="catalytic activity">
    <reaction evidence="2">
        <text>N(4)-acetylcytidine + H2O = cytidine + acetate + H(+)</text>
        <dbReference type="Rhea" id="RHEA:62932"/>
        <dbReference type="ChEBI" id="CHEBI:15377"/>
        <dbReference type="ChEBI" id="CHEBI:15378"/>
        <dbReference type="ChEBI" id="CHEBI:17562"/>
        <dbReference type="ChEBI" id="CHEBI:30089"/>
        <dbReference type="ChEBI" id="CHEBI:70989"/>
        <dbReference type="EC" id="3.5.1.135"/>
    </reaction>
</comment>
<comment type="catalytic activity">
    <reaction evidence="2">
        <text>N(4)-acetyl-2'-deoxycytidine + H2O = 2'-deoxycytidine + acetate + H(+)</text>
        <dbReference type="Rhea" id="RHEA:62936"/>
        <dbReference type="ChEBI" id="CHEBI:15377"/>
        <dbReference type="ChEBI" id="CHEBI:15378"/>
        <dbReference type="ChEBI" id="CHEBI:15698"/>
        <dbReference type="ChEBI" id="CHEBI:30089"/>
        <dbReference type="ChEBI" id="CHEBI:146133"/>
        <dbReference type="EC" id="3.5.1.135"/>
    </reaction>
</comment>
<comment type="catalytic activity">
    <reaction evidence="2">
        <text>N(4)-acetylcytosine + H2O = cytosine + acetate + H(+)</text>
        <dbReference type="Rhea" id="RHEA:62940"/>
        <dbReference type="ChEBI" id="CHEBI:15377"/>
        <dbReference type="ChEBI" id="CHEBI:15378"/>
        <dbReference type="ChEBI" id="CHEBI:16040"/>
        <dbReference type="ChEBI" id="CHEBI:30089"/>
        <dbReference type="ChEBI" id="CHEBI:146134"/>
        <dbReference type="EC" id="3.5.1.135"/>
    </reaction>
</comment>
<comment type="similarity">
    <text evidence="2">Belongs to the N(4)-acetylcytidine amidohydrolase family.</text>
</comment>
<organism>
    <name type="scientific">Vibrio atlanticus (strain LGP32)</name>
    <name type="common">Vibrio splendidus (strain Mel32)</name>
    <dbReference type="NCBI Taxonomy" id="575788"/>
    <lineage>
        <taxon>Bacteria</taxon>
        <taxon>Pseudomonadati</taxon>
        <taxon>Pseudomonadota</taxon>
        <taxon>Gammaproteobacteria</taxon>
        <taxon>Vibrionales</taxon>
        <taxon>Vibrionaceae</taxon>
        <taxon>Vibrio</taxon>
    </lineage>
</organism>
<name>AC4CH_VIBA3</name>
<evidence type="ECO:0000255" key="1"/>
<evidence type="ECO:0000255" key="2">
    <source>
        <dbReference type="HAMAP-Rule" id="MF_00684"/>
    </source>
</evidence>